<dbReference type="EC" id="2.3.1.-" evidence="4"/>
<dbReference type="EMBL" id="OR962264">
    <property type="protein sequence ID" value="XAF84281.1"/>
    <property type="molecule type" value="Genomic_DNA"/>
</dbReference>
<dbReference type="UniPathway" id="UPA00213"/>
<dbReference type="GO" id="GO:0016020">
    <property type="term" value="C:membrane"/>
    <property type="evidence" value="ECO:0007669"/>
    <property type="project" value="UniProtKB-SubCell"/>
</dbReference>
<dbReference type="GO" id="GO:0008374">
    <property type="term" value="F:O-acyltransferase activity"/>
    <property type="evidence" value="ECO:0007669"/>
    <property type="project" value="InterPro"/>
</dbReference>
<dbReference type="GO" id="GO:0006629">
    <property type="term" value="P:lipid metabolic process"/>
    <property type="evidence" value="ECO:0007669"/>
    <property type="project" value="InterPro"/>
</dbReference>
<dbReference type="InterPro" id="IPR044851">
    <property type="entry name" value="Wax_synthase"/>
</dbReference>
<dbReference type="InterPro" id="IPR032805">
    <property type="entry name" value="Wax_synthase_dom"/>
</dbReference>
<dbReference type="PANTHER" id="PTHR31595">
    <property type="entry name" value="LONG-CHAIN-ALCOHOL O-FATTY-ACYLTRANSFERASE 3-RELATED"/>
    <property type="match status" value="1"/>
</dbReference>
<dbReference type="PANTHER" id="PTHR31595:SF67">
    <property type="entry name" value="WAX SYNTHASE DOMAIN-CONTAINING PROTEIN"/>
    <property type="match status" value="1"/>
</dbReference>
<dbReference type="Pfam" id="PF13813">
    <property type="entry name" value="MBOAT_2"/>
    <property type="match status" value="1"/>
</dbReference>
<proteinExistence type="evidence at protein level"/>
<reference key="1">
    <citation type="journal article" date="2024" name="J. Am. Chem. Soc.">
        <title>Biosynthesis of Enfumafungin-type Antibiotic Reveals an Unusual Enzymatic Fusion Pattern and Unprecedented C-C Bond Cleavage.</title>
        <authorList>
            <person name="Cao Z.Q."/>
            <person name="Wang G.Q."/>
            <person name="Luo R."/>
            <person name="Gao Y.H."/>
            <person name="Lv J.M."/>
            <person name="Qin S.Y."/>
            <person name="Chen G.D."/>
            <person name="Awakawa T."/>
            <person name="Bao X.F."/>
            <person name="Mei Q.H."/>
            <person name="Yao X.S."/>
            <person name="Hu D."/>
            <person name="Abe I."/>
            <person name="Gao H."/>
        </authorList>
    </citation>
    <scope>NUCLEOTIDE SEQUENCE [GENOMIC DNA]</scope>
    <scope>FUNCTION</scope>
    <scope>CATALYTIC ACTIVITY</scope>
    <scope>PATHWAY</scope>
    <scope>BIOTECHNOLOGY</scope>
</reference>
<gene>
    <name evidence="5" type="primary">fsoF</name>
</gene>
<feature type="chain" id="PRO_0000461499" description="Acetyltransferase fsoF">
    <location>
        <begin position="1"/>
        <end position="419"/>
    </location>
</feature>
<feature type="transmembrane region" description="Helical" evidence="1">
    <location>
        <begin position="4"/>
        <end position="24"/>
    </location>
</feature>
<feature type="transmembrane region" description="Helical" evidence="1">
    <location>
        <begin position="62"/>
        <end position="82"/>
    </location>
</feature>
<feature type="transmembrane region" description="Helical" evidence="1">
    <location>
        <begin position="230"/>
        <end position="250"/>
    </location>
</feature>
<feature type="transmembrane region" description="Helical" evidence="1">
    <location>
        <begin position="314"/>
        <end position="334"/>
    </location>
</feature>
<feature type="transmembrane region" description="Helical" evidence="1">
    <location>
        <begin position="337"/>
        <end position="357"/>
    </location>
</feature>
<feature type="transmembrane region" description="Helical" evidence="1">
    <location>
        <begin position="386"/>
        <end position="406"/>
    </location>
</feature>
<feature type="region of interest" description="Disordered" evidence="3">
    <location>
        <begin position="89"/>
        <end position="114"/>
    </location>
</feature>
<feature type="glycosylation site" description="N-linked (GlcNAc...) asparagine" evidence="2">
    <location>
        <position position="2"/>
    </location>
</feature>
<feature type="glycosylation site" description="N-linked (GlcNAc...) asparagine" evidence="2">
    <location>
        <position position="112"/>
    </location>
</feature>
<feature type="glycosylation site" description="N-linked (GlcNAc...) asparagine" evidence="2">
    <location>
        <position position="169"/>
    </location>
</feature>
<accession>P9WEG8</accession>
<protein>
    <recommendedName>
        <fullName evidence="5">Acetyltransferase fsoF</fullName>
        <ecNumber evidence="4">2.3.1.-</ecNumber>
    </recommendedName>
    <alternativeName>
        <fullName evidence="5">Fuscoatroside biosynthesis cluster protein F</fullName>
    </alternativeName>
</protein>
<keyword id="KW-0012">Acyltransferase</keyword>
<keyword id="KW-0325">Glycoprotein</keyword>
<keyword id="KW-0472">Membrane</keyword>
<keyword id="KW-0808">Transferase</keyword>
<keyword id="KW-0812">Transmembrane</keyword>
<keyword id="KW-1133">Transmembrane helix</keyword>
<comment type="function">
    <text evidence="4">Terpene cyclase-glycosyl transferase fusion protein; part of the gene cluster that mediates the biosynthesis of the enfumafungin-type antibiotic, fuscoatroside (PubMed:38654452). Within the pathway, fsoF catalyzes the acetylation of C2-alpha-OH following the C2 hydroxylation by the cytochrome monooxygenase fsoD (PubMed:38654452). The fuscoatroside biosynthesis is initiated by the cyclization of 2,3(S)-oxidosqualene through FsoA's terpene cyclase (TC) domain, leading to the formation of the fernane skeleton isomotiol, harboring a fernane triterpene skeleton with a C8-C9 double bond. Subsequently, C2-alpha-hydroxylation mediated by fsoD results in the production of 2-alpha-hydroxy-isomotiol, which is further acetylated by fsoF. The glycosyltransferase (GT) domain of FsoA may convert isomotiol, 2-alpha-hydroxy-isomotiol, and the acetylated derivative of 2-alpha-hydroxy-isomotiol into their corresponding glycosides 3-O-(beta-D-glucopyranosyl)-isomotiol, 3-O-(beta-D-glucopyranosyl)-2-alpha-hydroxy-isomotiol, and 3-O-(beta-D-glucopyranosyl)-2-alpha-acetoxy-isomotiol, which then undergo oxidative cleavage under the action of fsoE to form s 2-deacetoxy-fuscoatroside, 2-deacetyl-fuscoatroside, and fuscoatroside, respectively. Although hydroxylation followed by acetylation of 3-O-(beta-D-glucopyranosyl)-isomotiol and 2-deacetoxy-fuscoatroside by fsoD and fsoF could not be ruled out, this process is likely to occur with difficulty due to bulky steric hindrance caused by the presence of a glycan at C3 in these compounds. Interestingly, fsoE can also utilize the aglycones isomotiol and 2-alpha-hydroxy-isomotiol as substrates to generate 19-beta-hydroxy-isomotiol and 2-alpha,19-beta-dihydroxy-isomotiol, respectively. These reactions occur with lower efficiency. Finally, fsoE can further convert 2-alpha,19-beta-dihydroxy-isomotiol into 2-alpha-hydroxy-ismotiol-19-one and 2-alpha-hydroxy-ismotiol-19-one into 2-deacetyl-3-deglucopyranosyl-fuscoatroside (PubMed:38654452).</text>
</comment>
<comment type="catalytic activity">
    <reaction evidence="4">
        <text>3-O-(beta-D-glucopyranosyl)-2alpha-hydroxyisomotiol + acetyl-CoA = 3-O-(beta-D-glucopyranosyl)-2alpha-acetoxyisomotiol + CoA</text>
        <dbReference type="Rhea" id="RHEA:83523"/>
        <dbReference type="ChEBI" id="CHEBI:57287"/>
        <dbReference type="ChEBI" id="CHEBI:57288"/>
        <dbReference type="ChEBI" id="CHEBI:232475"/>
        <dbReference type="ChEBI" id="CHEBI:232477"/>
    </reaction>
    <physiologicalReaction direction="left-to-right" evidence="4">
        <dbReference type="Rhea" id="RHEA:83524"/>
    </physiologicalReaction>
</comment>
<comment type="catalytic activity">
    <reaction evidence="4">
        <text>2-deacetylfuscoatroside + acetyl-CoA = fuscoatroside + CoA</text>
        <dbReference type="Rhea" id="RHEA:83527"/>
        <dbReference type="ChEBI" id="CHEBI:57287"/>
        <dbReference type="ChEBI" id="CHEBI:57288"/>
        <dbReference type="ChEBI" id="CHEBI:232479"/>
        <dbReference type="ChEBI" id="CHEBI:232480"/>
    </reaction>
    <physiologicalReaction direction="left-to-right" evidence="4">
        <dbReference type="Rhea" id="RHEA:83528"/>
    </physiologicalReaction>
</comment>
<comment type="pathway">
    <text evidence="4">Secondary metabolite biosynthesis; terpenoid biosynthesis.</text>
</comment>
<comment type="subcellular location">
    <subcellularLocation>
        <location evidence="1">Membrane</location>
        <topology evidence="1">Multi-pass membrane protein</topology>
    </subcellularLocation>
</comment>
<comment type="biotechnology">
    <text evidence="4">Fuscoatroside and some of its derivatives show interesting antifungal activity against Candida albicans and Aspergillus niger.</text>
</comment>
<comment type="similarity">
    <text evidence="6">Belongs to the wax synthase family.</text>
</comment>
<evidence type="ECO:0000255" key="1"/>
<evidence type="ECO:0000255" key="2">
    <source>
        <dbReference type="PROSITE-ProRule" id="PRU00498"/>
    </source>
</evidence>
<evidence type="ECO:0000256" key="3">
    <source>
        <dbReference type="SAM" id="MobiDB-lite"/>
    </source>
</evidence>
<evidence type="ECO:0000269" key="4">
    <source>
    </source>
</evidence>
<evidence type="ECO:0000303" key="5">
    <source>
    </source>
</evidence>
<evidence type="ECO:0000305" key="6"/>
<organism>
    <name type="scientific">Humicola fuscoatra</name>
    <dbReference type="NCBI Taxonomy" id="112175"/>
    <lineage>
        <taxon>Eukaryota</taxon>
        <taxon>Fungi</taxon>
        <taxon>Dikarya</taxon>
        <taxon>Ascomycota</taxon>
        <taxon>Pezizomycotina</taxon>
        <taxon>Sordariomycetes</taxon>
        <taxon>Sordariomycetidae</taxon>
        <taxon>Sordariales</taxon>
        <taxon>Chaetomiaceae</taxon>
        <taxon>Humicola</taxon>
    </lineage>
</organism>
<sequence length="419" mass="46038">MNHTIISLALIFFQLTTTALVVGFTSREHLFLRAIGSVPQGFSAYHQIVFLCSHISNPVNRAFLGAASVFLVILYVDAAILSRWTFASQSPTSSLGGLIPPTTRDTPKTQNNATTAETSASFLRKLSFGFLIALQSRFPATPWAVPRLPPFHKADPKHTPTKSAFLLKNTTKCLVYLLLLRATSGLGNPDDNPVVFASDRIPLFSRLGDKGPGGITLSEIGTRVGAVMGYWAIQYAVIDLLYSLLAVVAVSLHLTDVKGWVPVFGSVSDARGVRLFWGQFYHQLVRQGCSSIAHYITYFILRFRKDSGSLAARYVFMTLVFAVSGVFHTLSDVSQGIPLGESGAMRFFVLQAIGIMLEDGFQAIVSRRRQSGHHGRGKLERVLGSVSGPVWLVTWLTWTSPGWIYMSLQRDRGVPIIPF</sequence>
<name>FSOF_HUMFU</name>